<sequence>MEELKGYLEKSRSKQQHFLYPLLFQEYIYVLAHDHGLNVNGSIFYEPAEISGYDKNFSSLLVKRLITRIYQQNYLINSVNDSNQNGFVGHNKNFYSQMISEGFAVIVEIPFSLRLVSSLEGKKEIPKSQNLRSIHSIFPFFEDKLSHLNCVSDILIPYPVHLEILVQILQCWIQDVPSLHLLRFFFHEYQNWNNLITPKKSNYYGFSKENPRLFLFLYNSYVVECESILVFLRKQSSYLRSTSSGTFLERAHFYEKIEQHLVVLCCNDFQKTLWLCKDPFMHYVRYQGKSILSSKGTHLLMKKWKSYFVNFWQCHFHFWSQPCRIHINQFSNFSFYFLGYLSSVPINPSAVKSQMLENFFLVDTVTKKFETIVPIIPMIGALSKAKFCNVSGNPISKPVWADLSDSDIIDRFGRTCRNLSHYYSGSSKKQSLYRIKYILRLSCARTLARKHKSTVRAFLQRLGSEFLEEFFTEEEKALSLILPRISYPLHKLYRERIWYLDIIRINDLVNHL</sequence>
<geneLocation type="chloroplast"/>
<organism>
    <name type="scientific">Amorphophallus abyssinicus</name>
    <name type="common">Black arum</name>
    <name type="synonym">Arum abyssinicum</name>
    <dbReference type="NCBI Taxonomy" id="175716"/>
    <lineage>
        <taxon>Eukaryota</taxon>
        <taxon>Viridiplantae</taxon>
        <taxon>Streptophyta</taxon>
        <taxon>Embryophyta</taxon>
        <taxon>Tracheophyta</taxon>
        <taxon>Spermatophyta</taxon>
        <taxon>Magnoliopsida</taxon>
        <taxon>Liliopsida</taxon>
        <taxon>Araceae</taxon>
        <taxon>Aroideae</taxon>
        <taxon>Thomsonieae</taxon>
        <taxon>Amorphophallus</taxon>
    </lineage>
</organism>
<evidence type="ECO:0000255" key="1">
    <source>
        <dbReference type="HAMAP-Rule" id="MF_01390"/>
    </source>
</evidence>
<gene>
    <name evidence="1" type="primary">matK</name>
</gene>
<name>MATK_AMOBY</name>
<feature type="chain" id="PRO_0000143229" description="Maturase K">
    <location>
        <begin position="1"/>
        <end position="512"/>
    </location>
</feature>
<protein>
    <recommendedName>
        <fullName evidence="1">Maturase K</fullName>
    </recommendedName>
    <alternativeName>
        <fullName evidence="1">Intron maturase</fullName>
    </alternativeName>
</protein>
<accession>Q8MEH7</accession>
<reference key="1">
    <citation type="journal article" date="2002" name="Syst. Bot.">
        <title>Phylogeny of the tribe Thomsonieae (Araceae) based on chloroplast matK and trnL intron sequences.</title>
        <authorList>
            <person name="Grob G.B.J."/>
            <person name="Gravendeel B."/>
            <person name="Eurlings M.C.M."/>
            <person name="Hetterscheid W.L.A."/>
        </authorList>
        <dbReference type="AGRICOLA" id="IND23294517"/>
    </citation>
    <scope>NUCLEOTIDE SEQUENCE [GENOMIC DNA]</scope>
</reference>
<comment type="function">
    <text evidence="1">Usually encoded in the trnK tRNA gene intron. Probably assists in splicing its own and other chloroplast group II introns.</text>
</comment>
<comment type="subcellular location">
    <subcellularLocation>
        <location>Plastid</location>
        <location>Chloroplast</location>
    </subcellularLocation>
</comment>
<comment type="similarity">
    <text evidence="1">Belongs to the intron maturase 2 family. MatK subfamily.</text>
</comment>
<proteinExistence type="inferred from homology"/>
<dbReference type="EMBL" id="AF387379">
    <property type="protein sequence ID" value="AAM46554.1"/>
    <property type="molecule type" value="Genomic_DNA"/>
</dbReference>
<dbReference type="GO" id="GO:0009507">
    <property type="term" value="C:chloroplast"/>
    <property type="evidence" value="ECO:0007669"/>
    <property type="project" value="UniProtKB-SubCell"/>
</dbReference>
<dbReference type="GO" id="GO:0003723">
    <property type="term" value="F:RNA binding"/>
    <property type="evidence" value="ECO:0007669"/>
    <property type="project" value="UniProtKB-KW"/>
</dbReference>
<dbReference type="GO" id="GO:0006397">
    <property type="term" value="P:mRNA processing"/>
    <property type="evidence" value="ECO:0007669"/>
    <property type="project" value="UniProtKB-KW"/>
</dbReference>
<dbReference type="GO" id="GO:0008380">
    <property type="term" value="P:RNA splicing"/>
    <property type="evidence" value="ECO:0007669"/>
    <property type="project" value="UniProtKB-UniRule"/>
</dbReference>
<dbReference type="GO" id="GO:0008033">
    <property type="term" value="P:tRNA processing"/>
    <property type="evidence" value="ECO:0007669"/>
    <property type="project" value="UniProtKB-KW"/>
</dbReference>
<dbReference type="HAMAP" id="MF_01390">
    <property type="entry name" value="MatK"/>
    <property type="match status" value="1"/>
</dbReference>
<dbReference type="InterPro" id="IPR024937">
    <property type="entry name" value="Domain_X"/>
</dbReference>
<dbReference type="InterPro" id="IPR002866">
    <property type="entry name" value="Maturase_MatK"/>
</dbReference>
<dbReference type="InterPro" id="IPR024942">
    <property type="entry name" value="Maturase_MatK_N"/>
</dbReference>
<dbReference type="PANTHER" id="PTHR34811">
    <property type="entry name" value="MATURASE K"/>
    <property type="match status" value="1"/>
</dbReference>
<dbReference type="PANTHER" id="PTHR34811:SF1">
    <property type="entry name" value="MATURASE K"/>
    <property type="match status" value="1"/>
</dbReference>
<dbReference type="Pfam" id="PF01348">
    <property type="entry name" value="Intron_maturas2"/>
    <property type="match status" value="1"/>
</dbReference>
<dbReference type="Pfam" id="PF01824">
    <property type="entry name" value="MatK_N"/>
    <property type="match status" value="1"/>
</dbReference>
<keyword id="KW-0150">Chloroplast</keyword>
<keyword id="KW-0507">mRNA processing</keyword>
<keyword id="KW-0934">Plastid</keyword>
<keyword id="KW-0694">RNA-binding</keyword>
<keyword id="KW-0819">tRNA processing</keyword>